<feature type="chain" id="PRO_1000073700" description="Urease subunit alpha">
    <location>
        <begin position="1"/>
        <end position="568"/>
    </location>
</feature>
<feature type="domain" description="Urease" evidence="1">
    <location>
        <begin position="130"/>
        <end position="568"/>
    </location>
</feature>
<feature type="active site" description="Proton donor" evidence="1">
    <location>
        <position position="321"/>
    </location>
</feature>
<feature type="binding site" evidence="1">
    <location>
        <position position="135"/>
    </location>
    <ligand>
        <name>Ni(2+)</name>
        <dbReference type="ChEBI" id="CHEBI:49786"/>
        <label>1</label>
    </ligand>
</feature>
<feature type="binding site" evidence="1">
    <location>
        <position position="137"/>
    </location>
    <ligand>
        <name>Ni(2+)</name>
        <dbReference type="ChEBI" id="CHEBI:49786"/>
        <label>1</label>
    </ligand>
</feature>
<feature type="binding site" description="via carbamate group" evidence="1">
    <location>
        <position position="218"/>
    </location>
    <ligand>
        <name>Ni(2+)</name>
        <dbReference type="ChEBI" id="CHEBI:49786"/>
        <label>1</label>
    </ligand>
</feature>
<feature type="binding site" description="via carbamate group" evidence="1">
    <location>
        <position position="218"/>
    </location>
    <ligand>
        <name>Ni(2+)</name>
        <dbReference type="ChEBI" id="CHEBI:49786"/>
        <label>2</label>
    </ligand>
</feature>
<feature type="binding site" evidence="1">
    <location>
        <position position="220"/>
    </location>
    <ligand>
        <name>substrate</name>
    </ligand>
</feature>
<feature type="binding site" evidence="1">
    <location>
        <position position="247"/>
    </location>
    <ligand>
        <name>Ni(2+)</name>
        <dbReference type="ChEBI" id="CHEBI:49786"/>
        <label>2</label>
    </ligand>
</feature>
<feature type="binding site" evidence="1">
    <location>
        <position position="273"/>
    </location>
    <ligand>
        <name>Ni(2+)</name>
        <dbReference type="ChEBI" id="CHEBI:49786"/>
        <label>2</label>
    </ligand>
</feature>
<feature type="binding site" evidence="1">
    <location>
        <position position="361"/>
    </location>
    <ligand>
        <name>Ni(2+)</name>
        <dbReference type="ChEBI" id="CHEBI:49786"/>
        <label>1</label>
    </ligand>
</feature>
<feature type="modified residue" description="N6-carboxylysine" evidence="1">
    <location>
        <position position="218"/>
    </location>
</feature>
<reference key="1">
    <citation type="submission" date="2006-08" db="EMBL/GenBank/DDBJ databases">
        <title>Complete sequence of chromosome 1 of Burkholderia cepacia AMMD.</title>
        <authorList>
            <person name="Copeland A."/>
            <person name="Lucas S."/>
            <person name="Lapidus A."/>
            <person name="Barry K."/>
            <person name="Detter J.C."/>
            <person name="Glavina del Rio T."/>
            <person name="Hammon N."/>
            <person name="Israni S."/>
            <person name="Pitluck S."/>
            <person name="Bruce D."/>
            <person name="Chain P."/>
            <person name="Malfatti S."/>
            <person name="Shin M."/>
            <person name="Vergez L."/>
            <person name="Schmutz J."/>
            <person name="Larimer F."/>
            <person name="Land M."/>
            <person name="Hauser L."/>
            <person name="Kyrpides N."/>
            <person name="Kim E."/>
            <person name="Parke J."/>
            <person name="Coenye T."/>
            <person name="Konstantinidis K."/>
            <person name="Ramette A."/>
            <person name="Tiedje J."/>
            <person name="Richardson P."/>
        </authorList>
    </citation>
    <scope>NUCLEOTIDE SEQUENCE [LARGE SCALE GENOMIC DNA]</scope>
    <source>
        <strain>ATCC BAA-244 / DSM 16087 / CCUG 44356 / LMG 19182 / AMMD</strain>
    </source>
</reference>
<protein>
    <recommendedName>
        <fullName evidence="1">Urease subunit alpha</fullName>
        <ecNumber evidence="1">3.5.1.5</ecNumber>
    </recommendedName>
    <alternativeName>
        <fullName evidence="1">Urea amidohydrolase subunit alpha</fullName>
    </alternativeName>
</protein>
<evidence type="ECO:0000255" key="1">
    <source>
        <dbReference type="HAMAP-Rule" id="MF_01953"/>
    </source>
</evidence>
<dbReference type="EC" id="3.5.1.5" evidence="1"/>
<dbReference type="EMBL" id="CP000440">
    <property type="protein sequence ID" value="ABI86338.1"/>
    <property type="molecule type" value="Genomic_DNA"/>
</dbReference>
<dbReference type="RefSeq" id="WP_011656157.1">
    <property type="nucleotide sequence ID" value="NZ_CP009798.1"/>
</dbReference>
<dbReference type="SMR" id="Q0BHN5"/>
<dbReference type="MEROPS" id="M38.982"/>
<dbReference type="GeneID" id="93083813"/>
<dbReference type="KEGG" id="bam:Bamb_0779"/>
<dbReference type="PATRIC" id="fig|339670.21.peg.813"/>
<dbReference type="eggNOG" id="COG0804">
    <property type="taxonomic scope" value="Bacteria"/>
</dbReference>
<dbReference type="UniPathway" id="UPA00258">
    <property type="reaction ID" value="UER00370"/>
</dbReference>
<dbReference type="Proteomes" id="UP000000662">
    <property type="component" value="Chromosome 1"/>
</dbReference>
<dbReference type="GO" id="GO:0005737">
    <property type="term" value="C:cytoplasm"/>
    <property type="evidence" value="ECO:0007669"/>
    <property type="project" value="UniProtKB-SubCell"/>
</dbReference>
<dbReference type="GO" id="GO:0016151">
    <property type="term" value="F:nickel cation binding"/>
    <property type="evidence" value="ECO:0007669"/>
    <property type="project" value="UniProtKB-UniRule"/>
</dbReference>
<dbReference type="GO" id="GO:0009039">
    <property type="term" value="F:urease activity"/>
    <property type="evidence" value="ECO:0007669"/>
    <property type="project" value="UniProtKB-UniRule"/>
</dbReference>
<dbReference type="GO" id="GO:0043419">
    <property type="term" value="P:urea catabolic process"/>
    <property type="evidence" value="ECO:0007669"/>
    <property type="project" value="UniProtKB-UniRule"/>
</dbReference>
<dbReference type="CDD" id="cd00375">
    <property type="entry name" value="Urease_alpha"/>
    <property type="match status" value="1"/>
</dbReference>
<dbReference type="Gene3D" id="3.20.20.140">
    <property type="entry name" value="Metal-dependent hydrolases"/>
    <property type="match status" value="1"/>
</dbReference>
<dbReference type="Gene3D" id="2.30.40.10">
    <property type="entry name" value="Urease, subunit C, domain 1"/>
    <property type="match status" value="1"/>
</dbReference>
<dbReference type="HAMAP" id="MF_01953">
    <property type="entry name" value="Urease_alpha"/>
    <property type="match status" value="1"/>
</dbReference>
<dbReference type="InterPro" id="IPR006680">
    <property type="entry name" value="Amidohydro-rel"/>
</dbReference>
<dbReference type="InterPro" id="IPR011059">
    <property type="entry name" value="Metal-dep_hydrolase_composite"/>
</dbReference>
<dbReference type="InterPro" id="IPR032466">
    <property type="entry name" value="Metal_Hydrolase"/>
</dbReference>
<dbReference type="InterPro" id="IPR011612">
    <property type="entry name" value="Urease_alpha_N_dom"/>
</dbReference>
<dbReference type="InterPro" id="IPR050112">
    <property type="entry name" value="Urease_alpha_subunit"/>
</dbReference>
<dbReference type="InterPro" id="IPR017950">
    <property type="entry name" value="Urease_AS"/>
</dbReference>
<dbReference type="InterPro" id="IPR005848">
    <property type="entry name" value="Urease_asu"/>
</dbReference>
<dbReference type="InterPro" id="IPR017951">
    <property type="entry name" value="Urease_asu_c"/>
</dbReference>
<dbReference type="InterPro" id="IPR029754">
    <property type="entry name" value="Urease_Ni-bd"/>
</dbReference>
<dbReference type="NCBIfam" id="NF009685">
    <property type="entry name" value="PRK13206.1"/>
    <property type="match status" value="1"/>
</dbReference>
<dbReference type="NCBIfam" id="NF009686">
    <property type="entry name" value="PRK13207.1"/>
    <property type="match status" value="1"/>
</dbReference>
<dbReference type="NCBIfam" id="TIGR01792">
    <property type="entry name" value="urease_alph"/>
    <property type="match status" value="1"/>
</dbReference>
<dbReference type="PANTHER" id="PTHR43440">
    <property type="entry name" value="UREASE"/>
    <property type="match status" value="1"/>
</dbReference>
<dbReference type="PANTHER" id="PTHR43440:SF1">
    <property type="entry name" value="UREASE"/>
    <property type="match status" value="1"/>
</dbReference>
<dbReference type="Pfam" id="PF01979">
    <property type="entry name" value="Amidohydro_1"/>
    <property type="match status" value="1"/>
</dbReference>
<dbReference type="Pfam" id="PF00449">
    <property type="entry name" value="Urease_alpha"/>
    <property type="match status" value="1"/>
</dbReference>
<dbReference type="PRINTS" id="PR01752">
    <property type="entry name" value="UREASE"/>
</dbReference>
<dbReference type="SUPFAM" id="SSF51338">
    <property type="entry name" value="Composite domain of metallo-dependent hydrolases"/>
    <property type="match status" value="2"/>
</dbReference>
<dbReference type="SUPFAM" id="SSF51556">
    <property type="entry name" value="Metallo-dependent hydrolases"/>
    <property type="match status" value="1"/>
</dbReference>
<dbReference type="PROSITE" id="PS01120">
    <property type="entry name" value="UREASE_1"/>
    <property type="match status" value="1"/>
</dbReference>
<dbReference type="PROSITE" id="PS00145">
    <property type="entry name" value="UREASE_2"/>
    <property type="match status" value="1"/>
</dbReference>
<dbReference type="PROSITE" id="PS51368">
    <property type="entry name" value="UREASE_3"/>
    <property type="match status" value="1"/>
</dbReference>
<organism>
    <name type="scientific">Burkholderia ambifaria (strain ATCC BAA-244 / DSM 16087 / CCUG 44356 / LMG 19182 / AMMD)</name>
    <name type="common">Burkholderia cepacia (strain AMMD)</name>
    <dbReference type="NCBI Taxonomy" id="339670"/>
    <lineage>
        <taxon>Bacteria</taxon>
        <taxon>Pseudomonadati</taxon>
        <taxon>Pseudomonadota</taxon>
        <taxon>Betaproteobacteria</taxon>
        <taxon>Burkholderiales</taxon>
        <taxon>Burkholderiaceae</taxon>
        <taxon>Burkholderia</taxon>
        <taxon>Burkholderia cepacia complex</taxon>
    </lineage>
</organism>
<name>URE1_BURCM</name>
<accession>Q0BHN5</accession>
<keyword id="KW-0963">Cytoplasm</keyword>
<keyword id="KW-0378">Hydrolase</keyword>
<keyword id="KW-0479">Metal-binding</keyword>
<keyword id="KW-0533">Nickel</keyword>
<comment type="catalytic activity">
    <reaction evidence="1">
        <text>urea + 2 H2O + H(+) = hydrogencarbonate + 2 NH4(+)</text>
        <dbReference type="Rhea" id="RHEA:20557"/>
        <dbReference type="ChEBI" id="CHEBI:15377"/>
        <dbReference type="ChEBI" id="CHEBI:15378"/>
        <dbReference type="ChEBI" id="CHEBI:16199"/>
        <dbReference type="ChEBI" id="CHEBI:17544"/>
        <dbReference type="ChEBI" id="CHEBI:28938"/>
        <dbReference type="EC" id="3.5.1.5"/>
    </reaction>
</comment>
<comment type="cofactor">
    <cofactor evidence="1">
        <name>Ni cation</name>
        <dbReference type="ChEBI" id="CHEBI:25516"/>
    </cofactor>
    <text evidence="1">Binds 2 nickel ions per subunit.</text>
</comment>
<comment type="pathway">
    <text evidence="1">Nitrogen metabolism; urea degradation; CO(2) and NH(3) from urea (urease route): step 1/1.</text>
</comment>
<comment type="subunit">
    <text evidence="1">Heterotrimer of UreA (gamma), UreB (beta) and UreC (alpha) subunits. Three heterotrimers associate to form the active enzyme.</text>
</comment>
<comment type="subcellular location">
    <subcellularLocation>
        <location evidence="1">Cytoplasm</location>
    </subcellularLocation>
</comment>
<comment type="PTM">
    <text evidence="1">Carboxylation allows a single lysine to coordinate two nickel ions.</text>
</comment>
<comment type="similarity">
    <text evidence="1">Belongs to the metallo-dependent hydrolases superfamily. Urease alpha subunit family.</text>
</comment>
<gene>
    <name evidence="1" type="primary">ureC</name>
    <name type="ordered locus">Bamb_0779</name>
</gene>
<sequence>MTLRLSRRAYAEMFGPTTGDRVRLADTELLIEIERDYTIYGEEVKFGGGKVIRDGMGQSQRVAADVPDTIITNAVILDHWGIVKADIAIKHGRIAAIGKAGNPDIQPGVTIAIGAATEVIAGEGLIVTAGGIDTHIHFISPQQIDEALASGVTTMLGGGTGPATGTNATTCTPGPWHMERMLQAADGWPINLGFLGKGNASLPQPLVEQIAAGAIGLKLHEDWGTTPAAIDNCLSVADDTDTQVAIHTDTLNEAGFVESTVAAFKGRTIHTYHTEGAGGGHAPDILKVCGEANVLPSSTNPTRPYTINTLDEHLDMLMVCHHLDPSIAEDLAFAESRIRRETIAAEDILHDLGALSMLSSDSQAMGRVGEVIIRTWQTAHKMKVQRGALPEDGARNDNFRAKRYVAKYTINPAITHGIAHEVGSIEPGKWADLVLWEPAFFGIKPSMILKGGMIAVAQMGDPNASIPTPQPVHYREMFATRGGALARTSLTFVSQMAADAGIAERYGLAKRIVPVRNCRNVTKADMIHNAWRPSISVDPETYDVIADGQLLTCEPASVLPMAQRYFLF</sequence>
<proteinExistence type="inferred from homology"/>